<gene>
    <name evidence="1" type="primary">lexA</name>
    <name type="ordered locus">LA_1447</name>
</gene>
<proteinExistence type="inferred from homology"/>
<keyword id="KW-0068">Autocatalytic cleavage</keyword>
<keyword id="KW-0227">DNA damage</keyword>
<keyword id="KW-0234">DNA repair</keyword>
<keyword id="KW-0235">DNA replication</keyword>
<keyword id="KW-0238">DNA-binding</keyword>
<keyword id="KW-0378">Hydrolase</keyword>
<keyword id="KW-1185">Reference proteome</keyword>
<keyword id="KW-0678">Repressor</keyword>
<keyword id="KW-0742">SOS response</keyword>
<keyword id="KW-0804">Transcription</keyword>
<keyword id="KW-0805">Transcription regulation</keyword>
<protein>
    <recommendedName>
        <fullName evidence="1">LexA repressor</fullName>
        <ecNumber evidence="1">3.4.21.88</ecNumber>
    </recommendedName>
</protein>
<dbReference type="EC" id="3.4.21.88" evidence="1"/>
<dbReference type="EMBL" id="AE010300">
    <property type="protein sequence ID" value="AAN48646.2"/>
    <property type="molecule type" value="Genomic_DNA"/>
</dbReference>
<dbReference type="RefSeq" id="NP_711628.2">
    <property type="nucleotide sequence ID" value="NC_004342.2"/>
</dbReference>
<dbReference type="RefSeq" id="WP_000654116.1">
    <property type="nucleotide sequence ID" value="NC_004342.2"/>
</dbReference>
<dbReference type="SMR" id="Q8F663"/>
<dbReference type="FunCoup" id="Q8F663">
    <property type="interactions" value="277"/>
</dbReference>
<dbReference type="STRING" id="189518.LA_1447"/>
<dbReference type="MEROPS" id="S24.001"/>
<dbReference type="PaxDb" id="189518-LA_1447"/>
<dbReference type="EnsemblBacteria" id="AAN48646">
    <property type="protein sequence ID" value="AAN48646"/>
    <property type="gene ID" value="LA_1447"/>
</dbReference>
<dbReference type="GeneID" id="61142189"/>
<dbReference type="KEGG" id="lil:LA_1447"/>
<dbReference type="PATRIC" id="fig|189518.3.peg.1442"/>
<dbReference type="HOGENOM" id="CLU_066192_45_1_12"/>
<dbReference type="InParanoid" id="Q8F663"/>
<dbReference type="OrthoDB" id="9802364at2"/>
<dbReference type="Proteomes" id="UP000001408">
    <property type="component" value="Chromosome I"/>
</dbReference>
<dbReference type="CollecTF" id="EXPREG_00001300"/>
<dbReference type="GO" id="GO:0032993">
    <property type="term" value="C:protein-DNA complex"/>
    <property type="evidence" value="ECO:0000315"/>
    <property type="project" value="CollecTF"/>
</dbReference>
<dbReference type="GO" id="GO:0001217">
    <property type="term" value="F:DNA-binding transcription repressor activity"/>
    <property type="evidence" value="ECO:0000318"/>
    <property type="project" value="GO_Central"/>
</dbReference>
<dbReference type="GO" id="GO:0043565">
    <property type="term" value="F:sequence-specific DNA binding"/>
    <property type="evidence" value="ECO:0000315"/>
    <property type="project" value="CollecTF"/>
</dbReference>
<dbReference type="GO" id="GO:0004252">
    <property type="term" value="F:serine-type endopeptidase activity"/>
    <property type="evidence" value="ECO:0007669"/>
    <property type="project" value="UniProtKB-UniRule"/>
</dbReference>
<dbReference type="GO" id="GO:0006281">
    <property type="term" value="P:DNA repair"/>
    <property type="evidence" value="ECO:0007669"/>
    <property type="project" value="UniProtKB-UniRule"/>
</dbReference>
<dbReference type="GO" id="GO:0006260">
    <property type="term" value="P:DNA replication"/>
    <property type="evidence" value="ECO:0007669"/>
    <property type="project" value="UniProtKB-UniRule"/>
</dbReference>
<dbReference type="GO" id="GO:0045892">
    <property type="term" value="P:negative regulation of DNA-templated transcription"/>
    <property type="evidence" value="ECO:0000318"/>
    <property type="project" value="GO_Central"/>
</dbReference>
<dbReference type="GO" id="GO:0006508">
    <property type="term" value="P:proteolysis"/>
    <property type="evidence" value="ECO:0007669"/>
    <property type="project" value="InterPro"/>
</dbReference>
<dbReference type="GO" id="GO:0009432">
    <property type="term" value="P:SOS response"/>
    <property type="evidence" value="ECO:0000318"/>
    <property type="project" value="GO_Central"/>
</dbReference>
<dbReference type="CDD" id="cd06529">
    <property type="entry name" value="S24_LexA-like"/>
    <property type="match status" value="1"/>
</dbReference>
<dbReference type="FunFam" id="1.10.10.10:FF:000009">
    <property type="entry name" value="LexA repressor"/>
    <property type="match status" value="1"/>
</dbReference>
<dbReference type="FunFam" id="2.10.109.10:FF:000001">
    <property type="entry name" value="LexA repressor"/>
    <property type="match status" value="1"/>
</dbReference>
<dbReference type="Gene3D" id="2.10.109.10">
    <property type="entry name" value="Umud Fragment, subunit A"/>
    <property type="match status" value="1"/>
</dbReference>
<dbReference type="Gene3D" id="1.10.10.10">
    <property type="entry name" value="Winged helix-like DNA-binding domain superfamily/Winged helix DNA-binding domain"/>
    <property type="match status" value="1"/>
</dbReference>
<dbReference type="HAMAP" id="MF_00015">
    <property type="entry name" value="LexA"/>
    <property type="match status" value="1"/>
</dbReference>
<dbReference type="InterPro" id="IPR006200">
    <property type="entry name" value="LexA"/>
</dbReference>
<dbReference type="InterPro" id="IPR039418">
    <property type="entry name" value="LexA-like"/>
</dbReference>
<dbReference type="InterPro" id="IPR036286">
    <property type="entry name" value="LexA/Signal_pep-like_sf"/>
</dbReference>
<dbReference type="InterPro" id="IPR006199">
    <property type="entry name" value="LexA_DNA-bd_dom"/>
</dbReference>
<dbReference type="InterPro" id="IPR050077">
    <property type="entry name" value="LexA_repressor"/>
</dbReference>
<dbReference type="InterPro" id="IPR006197">
    <property type="entry name" value="Peptidase_S24_LexA"/>
</dbReference>
<dbReference type="InterPro" id="IPR015927">
    <property type="entry name" value="Peptidase_S24_S26A/B/C"/>
</dbReference>
<dbReference type="InterPro" id="IPR036388">
    <property type="entry name" value="WH-like_DNA-bd_sf"/>
</dbReference>
<dbReference type="InterPro" id="IPR036390">
    <property type="entry name" value="WH_DNA-bd_sf"/>
</dbReference>
<dbReference type="NCBIfam" id="TIGR00498">
    <property type="entry name" value="lexA"/>
    <property type="match status" value="1"/>
</dbReference>
<dbReference type="PANTHER" id="PTHR33516">
    <property type="entry name" value="LEXA REPRESSOR"/>
    <property type="match status" value="1"/>
</dbReference>
<dbReference type="PANTHER" id="PTHR33516:SF2">
    <property type="entry name" value="LEXA REPRESSOR-RELATED"/>
    <property type="match status" value="1"/>
</dbReference>
<dbReference type="Pfam" id="PF01726">
    <property type="entry name" value="LexA_DNA_bind"/>
    <property type="match status" value="1"/>
</dbReference>
<dbReference type="Pfam" id="PF00717">
    <property type="entry name" value="Peptidase_S24"/>
    <property type="match status" value="1"/>
</dbReference>
<dbReference type="PRINTS" id="PR00726">
    <property type="entry name" value="LEXASERPTASE"/>
</dbReference>
<dbReference type="SUPFAM" id="SSF51306">
    <property type="entry name" value="LexA/Signal peptidase"/>
    <property type="match status" value="1"/>
</dbReference>
<dbReference type="SUPFAM" id="SSF46785">
    <property type="entry name" value="Winged helix' DNA-binding domain"/>
    <property type="match status" value="1"/>
</dbReference>
<evidence type="ECO:0000255" key="1">
    <source>
        <dbReference type="HAMAP-Rule" id="MF_00015"/>
    </source>
</evidence>
<sequence length="203" mass="22619">MKDLTDKQQAVLAFITAIIKERGFPPTIREIGDEFGITAKGAYDHLKAIEKKGYLKTAKNQSRAIELIRQSPMESLPVQATSIPVIGQVAAGLPIFAEENIESYIPVPDEMAKGNVPMYALRVQGDSMIEVGINDGDIAIIEKRDIARNGEIVVALIEDEATLKVYYKEQDQIRLEARNPKYKPIKTKKATVMGKLIGLYRIY</sequence>
<comment type="function">
    <text evidence="1">Represses a number of genes involved in the response to DNA damage (SOS response), including recA and lexA. In the presence of single-stranded DNA, RecA interacts with LexA causing an autocatalytic cleavage which disrupts the DNA-binding part of LexA, leading to derepression of the SOS regulon and eventually DNA repair.</text>
</comment>
<comment type="catalytic activity">
    <reaction evidence="1">
        <text>Hydrolysis of Ala-|-Gly bond in repressor LexA.</text>
        <dbReference type="EC" id="3.4.21.88"/>
    </reaction>
</comment>
<comment type="subunit">
    <text evidence="1">Homodimer.</text>
</comment>
<comment type="similarity">
    <text evidence="1">Belongs to the peptidase S24 family.</text>
</comment>
<organism>
    <name type="scientific">Leptospira interrogans serogroup Icterohaemorrhagiae serovar Lai (strain 56601)</name>
    <dbReference type="NCBI Taxonomy" id="189518"/>
    <lineage>
        <taxon>Bacteria</taxon>
        <taxon>Pseudomonadati</taxon>
        <taxon>Spirochaetota</taxon>
        <taxon>Spirochaetia</taxon>
        <taxon>Leptospirales</taxon>
        <taxon>Leptospiraceae</taxon>
        <taxon>Leptospira</taxon>
    </lineage>
</organism>
<reference key="1">
    <citation type="journal article" date="2003" name="Nature">
        <title>Unique physiological and pathogenic features of Leptospira interrogans revealed by whole-genome sequencing.</title>
        <authorList>
            <person name="Ren S.-X."/>
            <person name="Fu G."/>
            <person name="Jiang X.-G."/>
            <person name="Zeng R."/>
            <person name="Miao Y.-G."/>
            <person name="Xu H."/>
            <person name="Zhang Y.-X."/>
            <person name="Xiong H."/>
            <person name="Lu G."/>
            <person name="Lu L.-F."/>
            <person name="Jiang H.-Q."/>
            <person name="Jia J."/>
            <person name="Tu Y.-F."/>
            <person name="Jiang J.-X."/>
            <person name="Gu W.-Y."/>
            <person name="Zhang Y.-Q."/>
            <person name="Cai Z."/>
            <person name="Sheng H.-H."/>
            <person name="Yin H.-F."/>
            <person name="Zhang Y."/>
            <person name="Zhu G.-F."/>
            <person name="Wan M."/>
            <person name="Huang H.-L."/>
            <person name="Qian Z."/>
            <person name="Wang S.-Y."/>
            <person name="Ma W."/>
            <person name="Yao Z.-J."/>
            <person name="Shen Y."/>
            <person name="Qiang B.-Q."/>
            <person name="Xia Q.-C."/>
            <person name="Guo X.-K."/>
            <person name="Danchin A."/>
            <person name="Saint Girons I."/>
            <person name="Somerville R.L."/>
            <person name="Wen Y.-M."/>
            <person name="Shi M.-H."/>
            <person name="Chen Z."/>
            <person name="Xu J.-G."/>
            <person name="Zhao G.-P."/>
        </authorList>
    </citation>
    <scope>NUCLEOTIDE SEQUENCE [LARGE SCALE GENOMIC DNA]</scope>
    <source>
        <strain>56601</strain>
    </source>
</reference>
<feature type="chain" id="PRO_0000170050" description="LexA repressor">
    <location>
        <begin position="1"/>
        <end position="203"/>
    </location>
</feature>
<feature type="DNA-binding region" description="H-T-H motif" evidence="1">
    <location>
        <begin position="28"/>
        <end position="47"/>
    </location>
</feature>
<feature type="active site" description="For autocatalytic cleavage activity" evidence="1">
    <location>
        <position position="127"/>
    </location>
</feature>
<feature type="active site" description="For autocatalytic cleavage activity" evidence="1">
    <location>
        <position position="164"/>
    </location>
</feature>
<feature type="site" description="Cleavage; by autolysis" evidence="1">
    <location>
        <begin position="91"/>
        <end position="92"/>
    </location>
</feature>
<name>LEXA_LEPIN</name>
<accession>Q8F663</accession>